<dbReference type="EMBL" id="AY038031">
    <property type="protein sequence ID" value="AAK71495.1"/>
    <property type="molecule type" value="mRNA"/>
</dbReference>
<dbReference type="EMBL" id="AY048748">
    <property type="protein sequence ID" value="AAL09174.1"/>
    <property type="molecule type" value="Genomic_DNA"/>
</dbReference>
<dbReference type="EMBL" id="BC065628">
    <property type="protein sequence ID" value="AAH65628.1"/>
    <property type="molecule type" value="mRNA"/>
</dbReference>
<dbReference type="RefSeq" id="NP_694507.1">
    <property type="nucleotide sequence ID" value="NM_152975.2"/>
</dbReference>
<dbReference type="SMR" id="Q8UUZ1"/>
<dbReference type="FunCoup" id="Q8UUZ1">
    <property type="interactions" value="1260"/>
</dbReference>
<dbReference type="STRING" id="7955.ENSDARP00000019528"/>
<dbReference type="PaxDb" id="7955-ENSDARP00000019528"/>
<dbReference type="Ensembl" id="ENSDART00000014608">
    <property type="protein sequence ID" value="ENSDARP00000019528"/>
    <property type="gene ID" value="ENSDARG00000015266"/>
</dbReference>
<dbReference type="GeneID" id="117234"/>
<dbReference type="KEGG" id="dre:117234"/>
<dbReference type="AGR" id="ZFIN:ZDB-GENE-011101-3"/>
<dbReference type="CTD" id="10586"/>
<dbReference type="ZFIN" id="ZDB-GENE-011101-3">
    <property type="gene designation" value="mab21l2"/>
</dbReference>
<dbReference type="eggNOG" id="KOG3963">
    <property type="taxonomic scope" value="Eukaryota"/>
</dbReference>
<dbReference type="HOGENOM" id="CLU_045315_0_0_1"/>
<dbReference type="InParanoid" id="Q8UUZ1"/>
<dbReference type="OMA" id="WDESCIA"/>
<dbReference type="OrthoDB" id="5961151at2759"/>
<dbReference type="PhylomeDB" id="Q8UUZ1"/>
<dbReference type="TreeFam" id="TF315012"/>
<dbReference type="PRO" id="PR:Q8UUZ1"/>
<dbReference type="Proteomes" id="UP000000437">
    <property type="component" value="Chromosome 1"/>
</dbReference>
<dbReference type="Bgee" id="ENSDARG00000015266">
    <property type="expression patterns" value="Expressed in larva and 31 other cell types or tissues"/>
</dbReference>
<dbReference type="GO" id="GO:0005737">
    <property type="term" value="C:cytoplasm"/>
    <property type="evidence" value="ECO:0000314"/>
    <property type="project" value="UniProtKB"/>
</dbReference>
<dbReference type="GO" id="GO:0005634">
    <property type="term" value="C:nucleus"/>
    <property type="evidence" value="ECO:0000314"/>
    <property type="project" value="UniProtKB"/>
</dbReference>
<dbReference type="GO" id="GO:0043010">
    <property type="term" value="P:camera-type eye development"/>
    <property type="evidence" value="ECO:0000315"/>
    <property type="project" value="ZFIN"/>
</dbReference>
<dbReference type="GO" id="GO:0061386">
    <property type="term" value="P:closure of optic fissure"/>
    <property type="evidence" value="ECO:0000315"/>
    <property type="project" value="ZFIN"/>
</dbReference>
<dbReference type="GO" id="GO:0061303">
    <property type="term" value="P:cornea development in camera-type eye"/>
    <property type="evidence" value="ECO:0000315"/>
    <property type="project" value="ZFIN"/>
</dbReference>
<dbReference type="GO" id="GO:0031076">
    <property type="term" value="P:embryonic camera-type eye development"/>
    <property type="evidence" value="ECO:0000315"/>
    <property type="project" value="ZFIN"/>
</dbReference>
<dbReference type="GO" id="GO:0048701">
    <property type="term" value="P:embryonic cranial skeleton morphogenesis"/>
    <property type="evidence" value="ECO:0000315"/>
    <property type="project" value="ZFIN"/>
</dbReference>
<dbReference type="GO" id="GO:0048048">
    <property type="term" value="P:embryonic eye morphogenesis"/>
    <property type="evidence" value="ECO:0000315"/>
    <property type="project" value="ZFIN"/>
</dbReference>
<dbReference type="GO" id="GO:0048484">
    <property type="term" value="P:enteric nervous system development"/>
    <property type="evidence" value="ECO:0000315"/>
    <property type="project" value="ZFIN"/>
</dbReference>
<dbReference type="GO" id="GO:0001654">
    <property type="term" value="P:eye development"/>
    <property type="evidence" value="ECO:0000315"/>
    <property type="project" value="ZFIN"/>
</dbReference>
<dbReference type="GO" id="GO:0002088">
    <property type="term" value="P:lens development in camera-type eye"/>
    <property type="evidence" value="ECO:0000315"/>
    <property type="project" value="ZFIN"/>
</dbReference>
<dbReference type="GO" id="GO:0002089">
    <property type="term" value="P:lens morphogenesis in camera-type eye"/>
    <property type="evidence" value="ECO:0000315"/>
    <property type="project" value="ZFIN"/>
</dbReference>
<dbReference type="GO" id="GO:0002072">
    <property type="term" value="P:optic cup morphogenesis involved in camera-type eye development"/>
    <property type="evidence" value="ECO:0000315"/>
    <property type="project" value="ZFIN"/>
</dbReference>
<dbReference type="GO" id="GO:0060041">
    <property type="term" value="P:retina development in camera-type eye"/>
    <property type="evidence" value="ECO:0000315"/>
    <property type="project" value="ZFIN"/>
</dbReference>
<dbReference type="FunFam" id="1.10.1410.40:FF:000002">
    <property type="entry name" value="protein mab-21-like 1"/>
    <property type="match status" value="1"/>
</dbReference>
<dbReference type="FunFam" id="3.30.460.90:FF:000001">
    <property type="entry name" value="protein mab-21-like 2"/>
    <property type="match status" value="1"/>
</dbReference>
<dbReference type="Gene3D" id="1.10.1410.40">
    <property type="match status" value="1"/>
</dbReference>
<dbReference type="Gene3D" id="3.30.460.90">
    <property type="match status" value="1"/>
</dbReference>
<dbReference type="InterPro" id="IPR046903">
    <property type="entry name" value="Mab-21-like_nuc_Trfase"/>
</dbReference>
<dbReference type="InterPro" id="IPR046906">
    <property type="entry name" value="Mab-21_HhH/H2TH-like"/>
</dbReference>
<dbReference type="InterPro" id="IPR024810">
    <property type="entry name" value="MAB21L/cGLR"/>
</dbReference>
<dbReference type="PANTHER" id="PTHR10656">
    <property type="entry name" value="CELL FATE DETERMINING PROTEIN MAB21-RELATED"/>
    <property type="match status" value="1"/>
</dbReference>
<dbReference type="PANTHER" id="PTHR10656:SF37">
    <property type="entry name" value="PROTEIN MAB-21-LIKE 2"/>
    <property type="match status" value="1"/>
</dbReference>
<dbReference type="Pfam" id="PF03281">
    <property type="entry name" value="Mab-21"/>
    <property type="match status" value="1"/>
</dbReference>
<dbReference type="Pfam" id="PF20266">
    <property type="entry name" value="Mab-21_C"/>
    <property type="match status" value="1"/>
</dbReference>
<dbReference type="SMART" id="SM01265">
    <property type="entry name" value="Mab-21"/>
    <property type="match status" value="1"/>
</dbReference>
<organism>
    <name type="scientific">Danio rerio</name>
    <name type="common">Zebrafish</name>
    <name type="synonym">Brachydanio rerio</name>
    <dbReference type="NCBI Taxonomy" id="7955"/>
    <lineage>
        <taxon>Eukaryota</taxon>
        <taxon>Metazoa</taxon>
        <taxon>Chordata</taxon>
        <taxon>Craniata</taxon>
        <taxon>Vertebrata</taxon>
        <taxon>Euteleostomi</taxon>
        <taxon>Actinopterygii</taxon>
        <taxon>Neopterygii</taxon>
        <taxon>Teleostei</taxon>
        <taxon>Ostariophysi</taxon>
        <taxon>Cypriniformes</taxon>
        <taxon>Danionidae</taxon>
        <taxon>Danioninae</taxon>
        <taxon>Danio</taxon>
    </lineage>
</organism>
<evidence type="ECO:0000269" key="1">
    <source>
    </source>
</evidence>
<evidence type="ECO:0000269" key="2">
    <source>
    </source>
</evidence>
<evidence type="ECO:0000269" key="3">
    <source>
    </source>
</evidence>
<evidence type="ECO:0000269" key="4">
    <source>
    </source>
</evidence>
<evidence type="ECO:0000269" key="5">
    <source>
    </source>
</evidence>
<evidence type="ECO:0000305" key="6"/>
<comment type="function">
    <text evidence="3 5">Required for eye morphogenesis. May promote the survival of proliferating retinal progenitor cells.</text>
</comment>
<comment type="subcellular location">
    <subcellularLocation>
        <location evidence="3 5">Nucleus</location>
    </subcellularLocation>
    <subcellularLocation>
        <location evidence="5">Cytoplasm</location>
    </subcellularLocation>
    <text evidence="5">Predominantly localizes to the nucleus, with some cytoplasmic localization (PubMed:25719200).</text>
</comment>
<comment type="developmental stage">
    <text evidence="1 2 3 4 5">Expressed from 11 hours post-fertilization (hpf). Expression in the midbrain and optic primordia begins at the onset of segmentation and increases to 14 hpf, remaining strong during lateral migration of the optic primordia. Expressed in the neural tube and the oblongated retinal epithelium from 18 hpf. Expression within the differentiating eyes subsequently decreases from 22 hpf to 35 hpf, with only weak expression at the edge of the lens observed from 35 hpf to 48 hpf. Expressed in the branchial pouches from 22 hpf, and in the pharyngeal arches, ganglia and hindbrain and spinal cord neurons from 24 hpf. Expressed in the lens perimeter and the differentiated amacrine and ganglion cell layers at 72 hpf.</text>
</comment>
<comment type="disruption phenotype">
    <text evidence="5">Severe lens and retinal defects leading to lethality.</text>
</comment>
<comment type="similarity">
    <text evidence="6">Belongs to the mab-21 family.</text>
</comment>
<protein>
    <recommendedName>
        <fullName>Protein mab-21-like 2</fullName>
    </recommendedName>
</protein>
<accession>Q8UUZ1</accession>
<keyword id="KW-0963">Cytoplasm</keyword>
<keyword id="KW-0217">Developmental protein</keyword>
<keyword id="KW-0539">Nucleus</keyword>
<keyword id="KW-1185">Reference proteome</keyword>
<reference key="1">
    <citation type="journal article" date="2001" name="Mech. Dev.">
        <title>Zebrafish mab21l2 is specifically expressed in the presumptive eye and tectum from early somitogenesis onwards.</title>
        <authorList>
            <person name="Kudoh T."/>
            <person name="Dawid I.B."/>
        </authorList>
    </citation>
    <scope>NUCLEOTIDE SEQUENCE [MRNA]</scope>
    <scope>DEVELOPMENTAL STAGE</scope>
</reference>
<reference key="2">
    <citation type="journal article" date="2002" name="Mech. Dev.">
        <title>Expression of zebrafish mab21 genes marks the differentiating eye, midbrain and neural tube.</title>
        <authorList>
            <person name="Wong Y.-M."/>
            <person name="Chow K.L."/>
        </authorList>
    </citation>
    <scope>NUCLEOTIDE SEQUENCE [GENOMIC DNA]</scope>
    <scope>DEVELOPMENTAL STAGE</scope>
</reference>
<reference key="3">
    <citation type="submission" date="2004-01" db="EMBL/GenBank/DDBJ databases">
        <authorList>
            <consortium name="NIH - Zebrafish Gene Collection (ZGC) project"/>
        </authorList>
    </citation>
    <scope>NUCLEOTIDE SEQUENCE [LARGE SCALE MRNA]</scope>
    <source>
        <tissue>Embryo</tissue>
    </source>
</reference>
<reference key="4">
    <citation type="journal article" date="2004" name="Dev. Biol.">
        <title>Zebrafish rx3 and mab21l2 are required during eye morphogenesis.</title>
        <authorList>
            <person name="Kennedy B.N."/>
            <person name="Stearns G.W."/>
            <person name="Smyth V.A."/>
            <person name="Ramamurthy V."/>
            <person name="van Eeden F."/>
            <person name="Ankoudinova I."/>
            <person name="Raible D."/>
            <person name="Hurley J.B."/>
            <person name="Brockerhoff S.E."/>
        </authorList>
    </citation>
    <scope>FUNCTION</scope>
    <scope>SUBCELLULAR LOCATION</scope>
    <scope>DEVELOPMENTAL STAGE</scope>
</reference>
<reference key="5">
    <citation type="journal article" date="2006" name="Mol. Cell. Endocrinol.">
        <title>A role for GnRH in early brain regionalization and eye development in zebrafish.</title>
        <authorList>
            <person name="Wu S."/>
            <person name="Page L."/>
            <person name="Sherwood N.M."/>
        </authorList>
    </citation>
    <scope>DEVELOPMENTAL STAGE</scope>
</reference>
<reference key="6">
    <citation type="journal article" date="2015" name="PLoS Genet.">
        <title>Mutations in MAB21L2 result in ocular Coloboma, microcornea and cataracts.</title>
        <authorList>
            <person name="Deml B."/>
            <person name="Kariminejad A."/>
            <person name="Borujerdi R.H."/>
            <person name="Muheisen S."/>
            <person name="Reis L.M."/>
            <person name="Semina E.V."/>
        </authorList>
    </citation>
    <scope>FUNCTION</scope>
    <scope>SUBCELLULAR LOCATION</scope>
    <scope>DISRUPTION PHENOTYPE</scope>
    <scope>DEVELOPMENTAL STAGE</scope>
    <scope>MUTAGENESIS OF 51-ARG-PHE-52</scope>
</reference>
<sequence length="359" mass="41014">MIATQAKLVYQLNKYYNERCQARKAAIAKTIREVCKVVSDVLKEVEVQEPRFISSLSEIDARYEGMEVIAPNEFEVVLYLNQMGVFNFVDDGSLPGCAVLKLSDGRKRSMSLWVEFITASGYLSARKIRSRFQTLVAQAVDKCSYRDVVKMVADTSEVKLRIRERYVVQITPAFKCTGIWPRSAAQWPMPHIPWPGPNRVAEVKAEGFNLLSKECYSLTGKQSSAESDAWVLQFAEAENRLLMSGCRKKCLSVLKTLRDRHLELPGQPLNNYHMKTLLLYECEKHPRETDWDESCLGDRLNGILLQLISCLQCRRCPHYFLPNLDLFQGKPHSALETAAKQTWRLAREILTNAKSLDKL</sequence>
<gene>
    <name type="primary">mab21l2</name>
</gene>
<proteinExistence type="evidence at protein level"/>
<name>MB212_DANRE</name>
<feature type="chain" id="PRO_0000312789" description="Protein mab-21-like 2">
    <location>
        <begin position="1"/>
        <end position="359"/>
    </location>
</feature>
<feature type="mutagenesis site" description="Mild lens phenotype and severe coloboma. A small number of fish survive to adulthood." evidence="5">
    <location>
        <begin position="51"/>
        <end position="52"/>
    </location>
</feature>